<evidence type="ECO:0000255" key="1"/>
<evidence type="ECO:0000269" key="2">
    <source>
    </source>
</evidence>
<evidence type="ECO:0000303" key="3">
    <source>
    </source>
</evidence>
<evidence type="ECO:0000305" key="4"/>
<reference key="1">
    <citation type="journal article" date="2010" name="Plant Cell">
        <title>Cell Number Regulator1 affects plant and organ size in maize: implications for crop yield enhancement and heterosis.</title>
        <authorList>
            <person name="Guo M."/>
            <person name="Rupe M.A."/>
            <person name="Dieter J.A."/>
            <person name="Zou J."/>
            <person name="Spielbauer D."/>
            <person name="Duncan K.E."/>
            <person name="Howard R.J."/>
            <person name="Hou Z."/>
            <person name="Simmons C.R."/>
        </authorList>
    </citation>
    <scope>NUCLEOTIDE SEQUENCE [MRNA] (ISOFORM 1)</scope>
    <scope>TISSUE SPECIFICITY</scope>
    <scope>GENE FAMILY</scope>
    <scope>NOMENCLATURE</scope>
    <source>
        <strain>cv. B73</strain>
    </source>
</reference>
<reference key="2">
    <citation type="journal article" date="2009" name="Plant Mol. Biol.">
        <title>Insights into corn genes derived from large-scale cDNA sequencing.</title>
        <authorList>
            <person name="Alexandrov N.N."/>
            <person name="Brover V.V."/>
            <person name="Freidin S."/>
            <person name="Troukhan M.E."/>
            <person name="Tatarinova T.V."/>
            <person name="Zhang H."/>
            <person name="Swaller T.J."/>
            <person name="Lu Y.-P."/>
            <person name="Bouck J."/>
            <person name="Flavell R.B."/>
            <person name="Feldmann K.A."/>
        </authorList>
    </citation>
    <scope>NUCLEOTIDE SEQUENCE [LARGE SCALE MRNA] (ISOFORMS 1 AND 2)</scope>
</reference>
<keyword id="KW-0025">Alternative splicing</keyword>
<keyword id="KW-0472">Membrane</keyword>
<keyword id="KW-1185">Reference proteome</keyword>
<keyword id="KW-0812">Transmembrane</keyword>
<keyword id="KW-1133">Transmembrane helix</keyword>
<comment type="subcellular location">
    <subcellularLocation>
        <location evidence="4">Membrane</location>
        <topology evidence="4">Multi-pass membrane protein</topology>
    </subcellularLocation>
</comment>
<comment type="alternative products">
    <event type="alternative splicing"/>
    <isoform>
        <id>D9HP25-1</id>
        <name>1</name>
        <sequence type="displayed"/>
    </isoform>
    <isoform>
        <id>D9HP25-2</id>
        <name>2</name>
        <sequence type="described" ref="VSP_040963"/>
    </isoform>
</comment>
<comment type="tissue specificity">
    <text evidence="2">Expressed in roots, coleoptiles, leaves and stalks.</text>
</comment>
<comment type="similarity">
    <text evidence="4">Belongs to the cornifelin family.</text>
</comment>
<organism>
    <name type="scientific">Zea mays</name>
    <name type="common">Maize</name>
    <dbReference type="NCBI Taxonomy" id="4577"/>
    <lineage>
        <taxon>Eukaryota</taxon>
        <taxon>Viridiplantae</taxon>
        <taxon>Streptophyta</taxon>
        <taxon>Embryophyta</taxon>
        <taxon>Tracheophyta</taxon>
        <taxon>Spermatophyta</taxon>
        <taxon>Magnoliopsida</taxon>
        <taxon>Liliopsida</taxon>
        <taxon>Poales</taxon>
        <taxon>Poaceae</taxon>
        <taxon>PACMAD clade</taxon>
        <taxon>Panicoideae</taxon>
        <taxon>Andropogonodae</taxon>
        <taxon>Andropogoneae</taxon>
        <taxon>Tripsacinae</taxon>
        <taxon>Zea</taxon>
    </lineage>
</organism>
<dbReference type="EMBL" id="HM008661">
    <property type="protein sequence ID" value="ADI48423.1"/>
    <property type="molecule type" value="mRNA"/>
</dbReference>
<dbReference type="EMBL" id="EU958331">
    <property type="protein sequence ID" value="ACG30449.1"/>
    <property type="molecule type" value="mRNA"/>
</dbReference>
<dbReference type="EMBL" id="EU955967">
    <property type="protein sequence ID" value="ACG28085.1"/>
    <property type="molecule type" value="mRNA"/>
</dbReference>
<dbReference type="RefSeq" id="NP_001147615.1">
    <property type="nucleotide sequence ID" value="NM_001154143.1"/>
</dbReference>
<dbReference type="RefSeq" id="NP_001148298.1">
    <molecule id="D9HP25-1"/>
    <property type="nucleotide sequence ID" value="NM_001154826.1"/>
</dbReference>
<dbReference type="FunCoup" id="D9HP25">
    <property type="interactions" value="10"/>
</dbReference>
<dbReference type="STRING" id="4577.D9HP25"/>
<dbReference type="PaxDb" id="4577-GRMZM2G023081_P01"/>
<dbReference type="GeneID" id="100281224"/>
<dbReference type="KEGG" id="zma:100281224"/>
<dbReference type="eggNOG" id="ENOG502S7UD">
    <property type="taxonomic scope" value="Eukaryota"/>
</dbReference>
<dbReference type="HOGENOM" id="CLU_083147_1_1_1"/>
<dbReference type="InParanoid" id="D9HP25"/>
<dbReference type="OMA" id="CAMIQEY"/>
<dbReference type="OrthoDB" id="1045822at2759"/>
<dbReference type="Proteomes" id="UP000007305">
    <property type="component" value="Unplaced"/>
</dbReference>
<dbReference type="ExpressionAtlas" id="D9HP25">
    <property type="expression patterns" value="baseline and differential"/>
</dbReference>
<dbReference type="GO" id="GO:0016020">
    <property type="term" value="C:membrane"/>
    <property type="evidence" value="ECO:0007669"/>
    <property type="project" value="UniProtKB-SubCell"/>
</dbReference>
<dbReference type="InterPro" id="IPR006461">
    <property type="entry name" value="PLAC_motif_containing"/>
</dbReference>
<dbReference type="NCBIfam" id="TIGR01571">
    <property type="entry name" value="A_thal_Cys_rich"/>
    <property type="match status" value="1"/>
</dbReference>
<dbReference type="PANTHER" id="PTHR15907">
    <property type="entry name" value="DUF614 FAMILY PROTEIN-RELATED"/>
    <property type="match status" value="1"/>
</dbReference>
<dbReference type="Pfam" id="PF04749">
    <property type="entry name" value="PLAC8"/>
    <property type="match status" value="1"/>
</dbReference>
<accession>D9HP25</accession>
<accession>B6STA2</accession>
<accession>B6T016</accession>
<protein>
    <recommendedName>
        <fullName>Cell number regulator 9</fullName>
    </recommendedName>
    <alternativeName>
        <fullName>ZmCNR09</fullName>
    </alternativeName>
</protein>
<feature type="chain" id="PRO_0000407737" description="Cell number regulator 9">
    <location>
        <begin position="1"/>
        <end position="175"/>
    </location>
</feature>
<feature type="transmembrane region" description="Helical" evidence="1">
    <location>
        <begin position="53"/>
        <end position="73"/>
    </location>
</feature>
<feature type="transmembrane region" description="Helical" evidence="1">
    <location>
        <begin position="80"/>
        <end position="100"/>
    </location>
</feature>
<feature type="splice variant" id="VSP_040963" description="In isoform 2." evidence="3">
    <original>SSQPAAEMAQ</original>
    <variation>ASE</variation>
    <location>
        <begin position="10"/>
        <end position="19"/>
    </location>
</feature>
<feature type="sequence conflict" description="In Ref. 2; ACG28085." evidence="4" ref="2">
    <original>I</original>
    <variation>V</variation>
    <location>
        <position position="69"/>
    </location>
</feature>
<feature type="sequence conflict" description="In Ref. 2; ACG28085." evidence="4" ref="2">
    <original>D</original>
    <variation>H</variation>
    <location>
        <position position="152"/>
    </location>
</feature>
<feature type="sequence conflict" description="In Ref. 2; ACG30449." evidence="4" ref="2">
    <original>E</original>
    <variation>D</variation>
    <location>
        <position position="170"/>
    </location>
</feature>
<sequence>MYPAKPAASSSQPAAEMAQPVVGIPISSPGAVAVGPVVGKWSSGLCACSDDCGLCCLTCWCPCITFGRIAEIVDRGATSCGVAGTIYTLLACFTGCHWIYSCTYRSRMRAQLGLPEACCCDCCVHFCCEPCALSQQYRELKARGFDPDLGWDVNAQKAAAAAAMYPPPAEGMMIR</sequence>
<proteinExistence type="evidence at transcript level"/>
<name>CNR9_MAIZE</name>
<gene>
    <name type="primary">CNR9</name>
</gene>